<name>CBP4B_DICDI</name>
<gene>
    <name type="primary">cbpD2</name>
    <name type="ORF">DDB_G0283083</name>
</gene>
<protein>
    <recommendedName>
        <fullName>Calcium-binding protein 4b</fullName>
    </recommendedName>
</protein>
<evidence type="ECO:0000255" key="1">
    <source>
        <dbReference type="PROSITE-ProRule" id="PRU00448"/>
    </source>
</evidence>
<evidence type="ECO:0000305" key="2"/>
<organism>
    <name type="scientific">Dictyostelium discoideum</name>
    <name type="common">Social amoeba</name>
    <dbReference type="NCBI Taxonomy" id="44689"/>
    <lineage>
        <taxon>Eukaryota</taxon>
        <taxon>Amoebozoa</taxon>
        <taxon>Evosea</taxon>
        <taxon>Eumycetozoa</taxon>
        <taxon>Dictyostelia</taxon>
        <taxon>Dictyosteliales</taxon>
        <taxon>Dictyosteliaceae</taxon>
        <taxon>Dictyostelium</taxon>
    </lineage>
</organism>
<comment type="alternative products">
    <event type="alternative splicing"/>
    <isoform>
        <id>Q9GYD9-1</id>
        <name>A</name>
        <sequence type="displayed"/>
    </isoform>
    <isoform>
        <id>Q9GYD9-2</id>
        <name>B</name>
        <sequence type="described" ref="VSP_029868 VSP_029869"/>
    </isoform>
</comment>
<keyword id="KW-0025">Alternative splicing</keyword>
<keyword id="KW-0106">Calcium</keyword>
<keyword id="KW-0479">Metal-binding</keyword>
<keyword id="KW-1185">Reference proteome</keyword>
<keyword id="KW-0677">Repeat</keyword>
<proteinExistence type="predicted"/>
<accession>Q9GYD9</accession>
<accession>Q54RI4</accession>
<accession>Q54RI5</accession>
<sequence>MVTKKEFLEELTNATNEAIKAADKNGDNQLSKKEVNDMYKKCKYPNPTLATNSLFELFDLDKDGKLSVNEVKTAVLVDYIIEAETCLKKFVDIIFKADSNKDNKITWDEARQYFITSGSNEAQAKVLANSMFEDVDSDDDKCITREELREYAIEYFEIYPTE</sequence>
<reference key="1">
    <citation type="journal article" date="2000" name="Biochim. Biophys. Acta">
        <title>Characterization and hetereologous expression of cDNAs encoding two novel closely related Ca(2+)-binding proteins in Dictyostelium discoideum.</title>
        <authorList>
            <person name="Dorywalska M."/>
            <person name="Coukell B."/>
            <person name="Dharamsi A."/>
        </authorList>
    </citation>
    <scope>NUCLEOTIDE SEQUENCE [GENOMIC DNA]</scope>
    <source>
        <strain>AX2</strain>
    </source>
</reference>
<reference key="2">
    <citation type="journal article" date="2005" name="Nature">
        <title>The genome of the social amoeba Dictyostelium discoideum.</title>
        <authorList>
            <person name="Eichinger L."/>
            <person name="Pachebat J.A."/>
            <person name="Gloeckner G."/>
            <person name="Rajandream M.A."/>
            <person name="Sucgang R."/>
            <person name="Berriman M."/>
            <person name="Song J."/>
            <person name="Olsen R."/>
            <person name="Szafranski K."/>
            <person name="Xu Q."/>
            <person name="Tunggal B."/>
            <person name="Kummerfeld S."/>
            <person name="Madera M."/>
            <person name="Konfortov B.A."/>
            <person name="Rivero F."/>
            <person name="Bankier A.T."/>
            <person name="Lehmann R."/>
            <person name="Hamlin N."/>
            <person name="Davies R."/>
            <person name="Gaudet P."/>
            <person name="Fey P."/>
            <person name="Pilcher K."/>
            <person name="Chen G."/>
            <person name="Saunders D."/>
            <person name="Sodergren E.J."/>
            <person name="Davis P."/>
            <person name="Kerhornou A."/>
            <person name="Nie X."/>
            <person name="Hall N."/>
            <person name="Anjard C."/>
            <person name="Hemphill L."/>
            <person name="Bason N."/>
            <person name="Farbrother P."/>
            <person name="Desany B."/>
            <person name="Just E."/>
            <person name="Morio T."/>
            <person name="Rost R."/>
            <person name="Churcher C.M."/>
            <person name="Cooper J."/>
            <person name="Haydock S."/>
            <person name="van Driessche N."/>
            <person name="Cronin A."/>
            <person name="Goodhead I."/>
            <person name="Muzny D.M."/>
            <person name="Mourier T."/>
            <person name="Pain A."/>
            <person name="Lu M."/>
            <person name="Harper D."/>
            <person name="Lindsay R."/>
            <person name="Hauser H."/>
            <person name="James K.D."/>
            <person name="Quiles M."/>
            <person name="Madan Babu M."/>
            <person name="Saito T."/>
            <person name="Buchrieser C."/>
            <person name="Wardroper A."/>
            <person name="Felder M."/>
            <person name="Thangavelu M."/>
            <person name="Johnson D."/>
            <person name="Knights A."/>
            <person name="Loulseged H."/>
            <person name="Mungall K.L."/>
            <person name="Oliver K."/>
            <person name="Price C."/>
            <person name="Quail M.A."/>
            <person name="Urushihara H."/>
            <person name="Hernandez J."/>
            <person name="Rabbinowitsch E."/>
            <person name="Steffen D."/>
            <person name="Sanders M."/>
            <person name="Ma J."/>
            <person name="Kohara Y."/>
            <person name="Sharp S."/>
            <person name="Simmonds M.N."/>
            <person name="Spiegler S."/>
            <person name="Tivey A."/>
            <person name="Sugano S."/>
            <person name="White B."/>
            <person name="Walker D."/>
            <person name="Woodward J.R."/>
            <person name="Winckler T."/>
            <person name="Tanaka Y."/>
            <person name="Shaulsky G."/>
            <person name="Schleicher M."/>
            <person name="Weinstock G.M."/>
            <person name="Rosenthal A."/>
            <person name="Cox E.C."/>
            <person name="Chisholm R.L."/>
            <person name="Gibbs R.A."/>
            <person name="Loomis W.F."/>
            <person name="Platzer M."/>
            <person name="Kay R.R."/>
            <person name="Williams J.G."/>
            <person name="Dear P.H."/>
            <person name="Noegel A.A."/>
            <person name="Barrell B.G."/>
            <person name="Kuspa A."/>
        </authorList>
    </citation>
    <scope>NUCLEOTIDE SEQUENCE [LARGE SCALE GENOMIC DNA]</scope>
    <scope>ALTERNATIVE SPLICING</scope>
    <source>
        <strain>AX4</strain>
    </source>
</reference>
<feature type="chain" id="PRO_0000312582" description="Calcium-binding protein 4b">
    <location>
        <begin position="1"/>
        <end position="162"/>
    </location>
</feature>
<feature type="domain" description="EF-hand 1" evidence="1">
    <location>
        <begin position="10"/>
        <end position="45"/>
    </location>
</feature>
<feature type="domain" description="EF-hand 2" evidence="1">
    <location>
        <begin position="46"/>
        <end position="81"/>
    </location>
</feature>
<feature type="domain" description="EF-hand 3" evidence="1">
    <location>
        <begin position="85"/>
        <end position="120"/>
    </location>
</feature>
<feature type="domain" description="EF-hand 4" evidence="1">
    <location>
        <begin position="123"/>
        <end position="158"/>
    </location>
</feature>
<feature type="binding site" evidence="1">
    <location>
        <position position="23"/>
    </location>
    <ligand>
        <name>Ca(2+)</name>
        <dbReference type="ChEBI" id="CHEBI:29108"/>
        <label>1</label>
    </ligand>
</feature>
<feature type="binding site" evidence="1">
    <location>
        <position position="25"/>
    </location>
    <ligand>
        <name>Ca(2+)</name>
        <dbReference type="ChEBI" id="CHEBI:29108"/>
        <label>1</label>
    </ligand>
</feature>
<feature type="binding site" evidence="1">
    <location>
        <position position="27"/>
    </location>
    <ligand>
        <name>Ca(2+)</name>
        <dbReference type="ChEBI" id="CHEBI:29108"/>
        <label>1</label>
    </ligand>
</feature>
<feature type="binding site" evidence="1">
    <location>
        <position position="29"/>
    </location>
    <ligand>
        <name>Ca(2+)</name>
        <dbReference type="ChEBI" id="CHEBI:29108"/>
        <label>1</label>
    </ligand>
</feature>
<feature type="binding site" evidence="1">
    <location>
        <position position="34"/>
    </location>
    <ligand>
        <name>Ca(2+)</name>
        <dbReference type="ChEBI" id="CHEBI:29108"/>
        <label>1</label>
    </ligand>
</feature>
<feature type="binding site" evidence="1">
    <location>
        <position position="59"/>
    </location>
    <ligand>
        <name>Ca(2+)</name>
        <dbReference type="ChEBI" id="CHEBI:29108"/>
        <label>2</label>
    </ligand>
</feature>
<feature type="binding site" evidence="1">
    <location>
        <position position="61"/>
    </location>
    <ligand>
        <name>Ca(2+)</name>
        <dbReference type="ChEBI" id="CHEBI:29108"/>
        <label>2</label>
    </ligand>
</feature>
<feature type="binding site" evidence="1">
    <location>
        <position position="63"/>
    </location>
    <ligand>
        <name>Ca(2+)</name>
        <dbReference type="ChEBI" id="CHEBI:29108"/>
        <label>2</label>
    </ligand>
</feature>
<feature type="binding site" evidence="1">
    <location>
        <position position="65"/>
    </location>
    <ligand>
        <name>Ca(2+)</name>
        <dbReference type="ChEBI" id="CHEBI:29108"/>
        <label>2</label>
    </ligand>
</feature>
<feature type="binding site" evidence="1">
    <location>
        <position position="70"/>
    </location>
    <ligand>
        <name>Ca(2+)</name>
        <dbReference type="ChEBI" id="CHEBI:29108"/>
        <label>2</label>
    </ligand>
</feature>
<feature type="binding site" evidence="1">
    <location>
        <position position="136"/>
    </location>
    <ligand>
        <name>Ca(2+)</name>
        <dbReference type="ChEBI" id="CHEBI:29108"/>
        <label>3</label>
    </ligand>
</feature>
<feature type="binding site" evidence="1">
    <location>
        <position position="138"/>
    </location>
    <ligand>
        <name>Ca(2+)</name>
        <dbReference type="ChEBI" id="CHEBI:29108"/>
        <label>3</label>
    </ligand>
</feature>
<feature type="binding site" evidence="1">
    <location>
        <position position="140"/>
    </location>
    <ligand>
        <name>Ca(2+)</name>
        <dbReference type="ChEBI" id="CHEBI:29108"/>
        <label>3</label>
    </ligand>
</feature>
<feature type="binding site" evidence="1">
    <location>
        <position position="142"/>
    </location>
    <ligand>
        <name>Ca(2+)</name>
        <dbReference type="ChEBI" id="CHEBI:29108"/>
        <label>3</label>
    </ligand>
</feature>
<feature type="binding site" evidence="1">
    <location>
        <position position="147"/>
    </location>
    <ligand>
        <name>Ca(2+)</name>
        <dbReference type="ChEBI" id="CHEBI:29108"/>
        <label>3</label>
    </ligand>
</feature>
<feature type="splice variant" id="VSP_029868" description="In isoform B." evidence="2">
    <original>YA</original>
    <variation>VL</variation>
    <location>
        <begin position="151"/>
        <end position="152"/>
    </location>
</feature>
<feature type="splice variant" id="VSP_029869" description="In isoform B." evidence="2">
    <location>
        <begin position="153"/>
        <end position="162"/>
    </location>
</feature>
<dbReference type="EMBL" id="AJ297598">
    <property type="protein sequence ID" value="CAC04146.1"/>
    <property type="molecule type" value="Genomic_DNA"/>
</dbReference>
<dbReference type="EMBL" id="AAFI02000050">
    <property type="protein sequence ID" value="EAL65870.1"/>
    <property type="molecule type" value="Genomic_DNA"/>
</dbReference>
<dbReference type="EMBL" id="AAFI02000050">
    <property type="protein sequence ID" value="EAL65871.1"/>
    <property type="molecule type" value="Genomic_DNA"/>
</dbReference>
<dbReference type="RefSeq" id="XP_639251.1">
    <property type="nucleotide sequence ID" value="XM_634159.1"/>
</dbReference>
<dbReference type="RefSeq" id="XP_639252.1">
    <property type="nucleotide sequence ID" value="XM_634160.1"/>
</dbReference>
<dbReference type="SMR" id="Q9GYD9"/>
<dbReference type="FunCoup" id="Q9GYD9">
    <property type="interactions" value="14"/>
</dbReference>
<dbReference type="STRING" id="44689.Q9GYD9"/>
<dbReference type="PaxDb" id="44689-DDB0191416"/>
<dbReference type="EnsemblProtists" id="EAL65870">
    <property type="protein sequence ID" value="EAL65870"/>
    <property type="gene ID" value="DDB_G0283083"/>
</dbReference>
<dbReference type="EnsemblProtists" id="EAL65871">
    <property type="protein sequence ID" value="EAL65871"/>
    <property type="gene ID" value="DDB_G0283083"/>
</dbReference>
<dbReference type="GeneID" id="8623937"/>
<dbReference type="KEGG" id="ddi:DDB_G0283083"/>
<dbReference type="dictyBase" id="DDB_G0283083">
    <property type="gene designation" value="cbpD2"/>
</dbReference>
<dbReference type="VEuPathDB" id="AmoebaDB:DDB_G0283083"/>
<dbReference type="HOGENOM" id="CLU_1638493_0_0_1"/>
<dbReference type="InParanoid" id="Q9GYD9"/>
<dbReference type="OMA" id="AGCENCT"/>
<dbReference type="PhylomeDB" id="Q9GYD9"/>
<dbReference type="PRO" id="PR:Q9GYD9"/>
<dbReference type="Proteomes" id="UP000002195">
    <property type="component" value="Chromosome 4"/>
</dbReference>
<dbReference type="GO" id="GO:0031012">
    <property type="term" value="C:extracellular matrix"/>
    <property type="evidence" value="ECO:0007005"/>
    <property type="project" value="dictyBase"/>
</dbReference>
<dbReference type="GO" id="GO:0005509">
    <property type="term" value="F:calcium ion binding"/>
    <property type="evidence" value="ECO:0000314"/>
    <property type="project" value="dictyBase"/>
</dbReference>
<dbReference type="FunFam" id="1.10.238.10:FF:000501">
    <property type="entry name" value="Calcium-binding protein 4a"/>
    <property type="match status" value="2"/>
</dbReference>
<dbReference type="Gene3D" id="1.10.238.10">
    <property type="entry name" value="EF-hand"/>
    <property type="match status" value="2"/>
</dbReference>
<dbReference type="InterPro" id="IPR011992">
    <property type="entry name" value="EF-hand-dom_pair"/>
</dbReference>
<dbReference type="InterPro" id="IPR018247">
    <property type="entry name" value="EF_Hand_1_Ca_BS"/>
</dbReference>
<dbReference type="InterPro" id="IPR002048">
    <property type="entry name" value="EF_hand_dom"/>
</dbReference>
<dbReference type="PANTHER" id="PTHR10827:SF85">
    <property type="entry name" value="CALCIUM-BINDING PROTEIN"/>
    <property type="match status" value="1"/>
</dbReference>
<dbReference type="PANTHER" id="PTHR10827">
    <property type="entry name" value="RETICULOCALBIN"/>
    <property type="match status" value="1"/>
</dbReference>
<dbReference type="Pfam" id="PF13499">
    <property type="entry name" value="EF-hand_7"/>
    <property type="match status" value="1"/>
</dbReference>
<dbReference type="SMART" id="SM00054">
    <property type="entry name" value="EFh"/>
    <property type="match status" value="4"/>
</dbReference>
<dbReference type="SUPFAM" id="SSF47473">
    <property type="entry name" value="EF-hand"/>
    <property type="match status" value="1"/>
</dbReference>
<dbReference type="PROSITE" id="PS00018">
    <property type="entry name" value="EF_HAND_1"/>
    <property type="match status" value="3"/>
</dbReference>
<dbReference type="PROSITE" id="PS50222">
    <property type="entry name" value="EF_HAND_2"/>
    <property type="match status" value="4"/>
</dbReference>